<dbReference type="EMBL" id="CP000284">
    <property type="protein sequence ID" value="ABE48572.1"/>
    <property type="molecule type" value="Genomic_DNA"/>
</dbReference>
<dbReference type="RefSeq" id="WP_011478669.1">
    <property type="nucleotide sequence ID" value="NC_007947.1"/>
</dbReference>
<dbReference type="SMR" id="Q1H4L5"/>
<dbReference type="STRING" id="265072.Mfla_0301"/>
<dbReference type="KEGG" id="mfa:Mfla_0301"/>
<dbReference type="eggNOG" id="COG0257">
    <property type="taxonomic scope" value="Bacteria"/>
</dbReference>
<dbReference type="HOGENOM" id="CLU_135723_6_2_4"/>
<dbReference type="Proteomes" id="UP000002440">
    <property type="component" value="Chromosome"/>
</dbReference>
<dbReference type="GO" id="GO:0005737">
    <property type="term" value="C:cytoplasm"/>
    <property type="evidence" value="ECO:0007669"/>
    <property type="project" value="UniProtKB-ARBA"/>
</dbReference>
<dbReference type="GO" id="GO:1990904">
    <property type="term" value="C:ribonucleoprotein complex"/>
    <property type="evidence" value="ECO:0007669"/>
    <property type="project" value="UniProtKB-KW"/>
</dbReference>
<dbReference type="GO" id="GO:0005840">
    <property type="term" value="C:ribosome"/>
    <property type="evidence" value="ECO:0007669"/>
    <property type="project" value="UniProtKB-KW"/>
</dbReference>
<dbReference type="GO" id="GO:0003735">
    <property type="term" value="F:structural constituent of ribosome"/>
    <property type="evidence" value="ECO:0007669"/>
    <property type="project" value="InterPro"/>
</dbReference>
<dbReference type="GO" id="GO:0006412">
    <property type="term" value="P:translation"/>
    <property type="evidence" value="ECO:0007669"/>
    <property type="project" value="UniProtKB-UniRule"/>
</dbReference>
<dbReference type="HAMAP" id="MF_00251">
    <property type="entry name" value="Ribosomal_bL36"/>
    <property type="match status" value="1"/>
</dbReference>
<dbReference type="InterPro" id="IPR000473">
    <property type="entry name" value="Ribosomal_bL36"/>
</dbReference>
<dbReference type="InterPro" id="IPR035977">
    <property type="entry name" value="Ribosomal_bL36_sp"/>
</dbReference>
<dbReference type="NCBIfam" id="TIGR01022">
    <property type="entry name" value="rpmJ_bact"/>
    <property type="match status" value="1"/>
</dbReference>
<dbReference type="PANTHER" id="PTHR42888">
    <property type="entry name" value="50S RIBOSOMAL PROTEIN L36, CHLOROPLASTIC"/>
    <property type="match status" value="1"/>
</dbReference>
<dbReference type="PANTHER" id="PTHR42888:SF1">
    <property type="entry name" value="LARGE RIBOSOMAL SUBUNIT PROTEIN BL36C"/>
    <property type="match status" value="1"/>
</dbReference>
<dbReference type="Pfam" id="PF00444">
    <property type="entry name" value="Ribosomal_L36"/>
    <property type="match status" value="1"/>
</dbReference>
<dbReference type="SUPFAM" id="SSF57840">
    <property type="entry name" value="Ribosomal protein L36"/>
    <property type="match status" value="1"/>
</dbReference>
<dbReference type="PROSITE" id="PS00828">
    <property type="entry name" value="RIBOSOMAL_L36"/>
    <property type="match status" value="1"/>
</dbReference>
<proteinExistence type="inferred from homology"/>
<comment type="similarity">
    <text evidence="1">Belongs to the bacterial ribosomal protein bL36 family.</text>
</comment>
<gene>
    <name evidence="1" type="primary">rpmJ1</name>
    <name type="ordered locus">Mfla_0301</name>
</gene>
<reference key="1">
    <citation type="submission" date="2006-03" db="EMBL/GenBank/DDBJ databases">
        <title>Complete sequence of Methylobacillus flagellatus KT.</title>
        <authorList>
            <consortium name="US DOE Joint Genome Institute"/>
            <person name="Copeland A."/>
            <person name="Lucas S."/>
            <person name="Lapidus A."/>
            <person name="Barry K."/>
            <person name="Detter J.C."/>
            <person name="Glavina del Rio T."/>
            <person name="Hammon N."/>
            <person name="Israni S."/>
            <person name="Dalin E."/>
            <person name="Tice H."/>
            <person name="Pitluck S."/>
            <person name="Brettin T."/>
            <person name="Bruce D."/>
            <person name="Han C."/>
            <person name="Tapia R."/>
            <person name="Saunders E."/>
            <person name="Gilna P."/>
            <person name="Schmutz J."/>
            <person name="Larimer F."/>
            <person name="Land M."/>
            <person name="Kyrpides N."/>
            <person name="Anderson I."/>
            <person name="Richardson P."/>
        </authorList>
    </citation>
    <scope>NUCLEOTIDE SEQUENCE [LARGE SCALE GENOMIC DNA]</scope>
    <source>
        <strain>ATCC 51484 / DSM 6875 / VKM B-1610 / KT</strain>
    </source>
</reference>
<organism>
    <name type="scientific">Methylobacillus flagellatus (strain ATCC 51484 / DSM 6875 / VKM B-1610 / KT)</name>
    <dbReference type="NCBI Taxonomy" id="265072"/>
    <lineage>
        <taxon>Bacteria</taxon>
        <taxon>Pseudomonadati</taxon>
        <taxon>Pseudomonadota</taxon>
        <taxon>Betaproteobacteria</taxon>
        <taxon>Nitrosomonadales</taxon>
        <taxon>Methylophilaceae</taxon>
        <taxon>Methylobacillus</taxon>
    </lineage>
</organism>
<name>RL361_METFK</name>
<evidence type="ECO:0000255" key="1">
    <source>
        <dbReference type="HAMAP-Rule" id="MF_00251"/>
    </source>
</evidence>
<evidence type="ECO:0000305" key="2"/>
<keyword id="KW-1185">Reference proteome</keyword>
<keyword id="KW-0687">Ribonucleoprotein</keyword>
<keyword id="KW-0689">Ribosomal protein</keyword>
<accession>Q1H4L5</accession>
<feature type="chain" id="PRO_0000344689" description="Large ribosomal subunit protein bL36A">
    <location>
        <begin position="1"/>
        <end position="37"/>
    </location>
</feature>
<sequence length="37" mass="4363">MRVRASVKTLCRNCKVVRRRGVVRVICTDPRHKQRQG</sequence>
<protein>
    <recommendedName>
        <fullName evidence="1">Large ribosomal subunit protein bL36A</fullName>
    </recommendedName>
    <alternativeName>
        <fullName evidence="2">50S ribosomal protein L36 1</fullName>
    </alternativeName>
</protein>